<proteinExistence type="inferred from homology"/>
<accession>A1AXN8</accession>
<name>RIMM_RUTMC</name>
<reference key="1">
    <citation type="journal article" date="2007" name="Science">
        <title>The Calyptogena magnifica chemoautotrophic symbiont genome.</title>
        <authorList>
            <person name="Newton I.L.G."/>
            <person name="Woyke T."/>
            <person name="Auchtung T.A."/>
            <person name="Dilly G.F."/>
            <person name="Dutton R.J."/>
            <person name="Fisher M.C."/>
            <person name="Fontanez K.M."/>
            <person name="Lau E."/>
            <person name="Stewart F.J."/>
            <person name="Richardson P.M."/>
            <person name="Barry K.W."/>
            <person name="Saunders E."/>
            <person name="Detter J.C."/>
            <person name="Wu D."/>
            <person name="Eisen J.A."/>
            <person name="Cavanaugh C.M."/>
        </authorList>
    </citation>
    <scope>NUCLEOTIDE SEQUENCE [LARGE SCALE GENOMIC DNA]</scope>
</reference>
<organism>
    <name type="scientific">Ruthia magnifica subsp. Calyptogena magnifica</name>
    <dbReference type="NCBI Taxonomy" id="413404"/>
    <lineage>
        <taxon>Bacteria</taxon>
        <taxon>Pseudomonadati</taxon>
        <taxon>Pseudomonadota</taxon>
        <taxon>Gammaproteobacteria</taxon>
        <taxon>Candidatus Pseudothioglobaceae</taxon>
        <taxon>Candidatus Ruthturnera</taxon>
    </lineage>
</organism>
<evidence type="ECO:0000255" key="1">
    <source>
        <dbReference type="HAMAP-Rule" id="MF_00014"/>
    </source>
</evidence>
<comment type="function">
    <text evidence="1">An accessory protein needed during the final step in the assembly of 30S ribosomal subunit, possibly for assembly of the head region. Essential for efficient processing of 16S rRNA. May be needed both before and after RbfA during the maturation of 16S rRNA. It has affinity for free ribosomal 30S subunits but not for 70S ribosomes.</text>
</comment>
<comment type="subunit">
    <text evidence="1">Binds ribosomal protein uS19.</text>
</comment>
<comment type="subcellular location">
    <subcellularLocation>
        <location evidence="1">Cytoplasm</location>
    </subcellularLocation>
</comment>
<comment type="domain">
    <text evidence="1">The PRC barrel domain binds ribosomal protein uS19.</text>
</comment>
<comment type="similarity">
    <text evidence="1">Belongs to the RimM family.</text>
</comment>
<keyword id="KW-0143">Chaperone</keyword>
<keyword id="KW-0963">Cytoplasm</keyword>
<keyword id="KW-0690">Ribosome biogenesis</keyword>
<keyword id="KW-0698">rRNA processing</keyword>
<gene>
    <name evidence="1" type="primary">rimM</name>
    <name type="ordered locus">Rmag_0989</name>
</gene>
<sequence>MKNVLLPNNQERKRSLSNSEIFTFDDKRLLIGQINSLFGVQGWVKIFSHTHPRENILFYQPWHINVDANWQTLEIIQGCVQAKTIVAQIKDVFDKEQARAYIGIDLYIKKSQLPQLKSGEYYWDDLIGLEVINKAKIILGKVSNLVDTGSNNVLVINGEREHWVPYISPFLIKVDIDNQIILVDWDENF</sequence>
<feature type="chain" id="PRO_0000351793" description="Ribosome maturation factor RimM">
    <location>
        <begin position="1"/>
        <end position="189"/>
    </location>
</feature>
<feature type="domain" description="PRC barrel" evidence="1">
    <location>
        <begin position="118"/>
        <end position="189"/>
    </location>
</feature>
<dbReference type="EMBL" id="CP000488">
    <property type="protein sequence ID" value="ABL02695.1"/>
    <property type="molecule type" value="Genomic_DNA"/>
</dbReference>
<dbReference type="SMR" id="A1AXN8"/>
<dbReference type="STRING" id="413404.Rmag_0989"/>
<dbReference type="KEGG" id="rma:Rmag_0989"/>
<dbReference type="eggNOG" id="COG0806">
    <property type="taxonomic scope" value="Bacteria"/>
</dbReference>
<dbReference type="HOGENOM" id="CLU_077636_1_0_6"/>
<dbReference type="OrthoDB" id="9783509at2"/>
<dbReference type="Proteomes" id="UP000002587">
    <property type="component" value="Chromosome"/>
</dbReference>
<dbReference type="GO" id="GO:0005737">
    <property type="term" value="C:cytoplasm"/>
    <property type="evidence" value="ECO:0007669"/>
    <property type="project" value="UniProtKB-SubCell"/>
</dbReference>
<dbReference type="GO" id="GO:0005840">
    <property type="term" value="C:ribosome"/>
    <property type="evidence" value="ECO:0007669"/>
    <property type="project" value="InterPro"/>
</dbReference>
<dbReference type="GO" id="GO:0043022">
    <property type="term" value="F:ribosome binding"/>
    <property type="evidence" value="ECO:0007669"/>
    <property type="project" value="InterPro"/>
</dbReference>
<dbReference type="GO" id="GO:0042274">
    <property type="term" value="P:ribosomal small subunit biogenesis"/>
    <property type="evidence" value="ECO:0007669"/>
    <property type="project" value="UniProtKB-UniRule"/>
</dbReference>
<dbReference type="GO" id="GO:0006364">
    <property type="term" value="P:rRNA processing"/>
    <property type="evidence" value="ECO:0007669"/>
    <property type="project" value="UniProtKB-UniRule"/>
</dbReference>
<dbReference type="Gene3D" id="2.30.30.240">
    <property type="entry name" value="PRC-barrel domain"/>
    <property type="match status" value="1"/>
</dbReference>
<dbReference type="Gene3D" id="2.40.30.60">
    <property type="entry name" value="RimM"/>
    <property type="match status" value="1"/>
</dbReference>
<dbReference type="HAMAP" id="MF_00014">
    <property type="entry name" value="Ribosome_mat_RimM"/>
    <property type="match status" value="1"/>
</dbReference>
<dbReference type="InterPro" id="IPR011033">
    <property type="entry name" value="PRC_barrel-like_sf"/>
</dbReference>
<dbReference type="InterPro" id="IPR056792">
    <property type="entry name" value="PRC_RimM"/>
</dbReference>
<dbReference type="InterPro" id="IPR011961">
    <property type="entry name" value="RimM"/>
</dbReference>
<dbReference type="InterPro" id="IPR002676">
    <property type="entry name" value="RimM_N"/>
</dbReference>
<dbReference type="InterPro" id="IPR036976">
    <property type="entry name" value="RimM_N_sf"/>
</dbReference>
<dbReference type="InterPro" id="IPR009000">
    <property type="entry name" value="Transl_B-barrel_sf"/>
</dbReference>
<dbReference type="NCBIfam" id="TIGR02273">
    <property type="entry name" value="16S_RimM"/>
    <property type="match status" value="1"/>
</dbReference>
<dbReference type="PANTHER" id="PTHR33692">
    <property type="entry name" value="RIBOSOME MATURATION FACTOR RIMM"/>
    <property type="match status" value="1"/>
</dbReference>
<dbReference type="PANTHER" id="PTHR33692:SF1">
    <property type="entry name" value="RIBOSOME MATURATION FACTOR RIMM"/>
    <property type="match status" value="1"/>
</dbReference>
<dbReference type="Pfam" id="PF24986">
    <property type="entry name" value="PRC_RimM"/>
    <property type="match status" value="1"/>
</dbReference>
<dbReference type="Pfam" id="PF01782">
    <property type="entry name" value="RimM"/>
    <property type="match status" value="1"/>
</dbReference>
<dbReference type="SUPFAM" id="SSF50346">
    <property type="entry name" value="PRC-barrel domain"/>
    <property type="match status" value="1"/>
</dbReference>
<dbReference type="SUPFAM" id="SSF50447">
    <property type="entry name" value="Translation proteins"/>
    <property type="match status" value="1"/>
</dbReference>
<protein>
    <recommendedName>
        <fullName evidence="1">Ribosome maturation factor RimM</fullName>
    </recommendedName>
</protein>